<protein>
    <recommendedName>
        <fullName evidence="2">Aquaporin Z</fullName>
    </recommendedName>
    <alternativeName>
        <fullName>Bacterial nodulin-like intrinsic protein</fullName>
    </alternativeName>
    <alternativeName>
        <fullName evidence="8">Water channel AqpZ</fullName>
    </alternativeName>
</protein>
<comment type="function">
    <text evidence="3 5 7">Channel that permits osmotically driven movement of water in both directions. It is involved in the osmoregulation and in the maintenance of cell turgor during volume expansion in rapidly growing cells. It mediates rapid entry or exit of water in response to abrupt changes in osmolarity.</text>
</comment>
<comment type="catalytic activity">
    <reaction evidence="3 5 7">
        <text>H2O(in) = H2O(out)</text>
        <dbReference type="Rhea" id="RHEA:29667"/>
        <dbReference type="ChEBI" id="CHEBI:15377"/>
    </reaction>
    <physiologicalReaction direction="left-to-right" evidence="3 5 7">
        <dbReference type="Rhea" id="RHEA:29668"/>
    </physiologicalReaction>
    <physiologicalReaction direction="right-to-left" evidence="3 5 7">
        <dbReference type="Rhea" id="RHEA:29669"/>
    </physiologicalReaction>
</comment>
<comment type="subunit">
    <text evidence="4 5 6">Homotetramer.</text>
</comment>
<comment type="interaction">
    <interactant intactId="EBI-957663">
        <id>P60844</id>
    </interactant>
    <interactant intactId="EBI-957663">
        <id>P60844</id>
        <label>aqpZ</label>
    </interactant>
    <organismsDiffer>false</organismsDiffer>
    <experiments>4</experiments>
</comment>
<comment type="subcellular location">
    <subcellularLocation>
        <location evidence="4 5">Cell inner membrane</location>
        <topology evidence="4 5">Multi-pass membrane protein</topology>
    </subcellularLocation>
</comment>
<comment type="induction">
    <text>By extracellular hypoosmotic conditions, especially during the mid-logarithmic phase of growth.</text>
</comment>
<comment type="domain">
    <text>Aquaporins contain two tandem repeats each containing three membrane-spanning domains and a pore-forming loop with the signature motif Asn-Pro-Ala (NPA).</text>
</comment>
<comment type="miscellaneous">
    <text evidence="9">It is a remarkably rigid tetramer that does not dissociate even when solubilized in SDS.</text>
</comment>
<comment type="similarity">
    <text evidence="2 8">Belongs to the MIP/aquaporin (TC 1.A.8) family.</text>
</comment>
<name>AQPZ_ECOLI</name>
<dbReference type="EMBL" id="U38664">
    <property type="protein sequence ID" value="AAC43518.1"/>
    <property type="molecule type" value="Genomic_DNA"/>
</dbReference>
<dbReference type="EMBL" id="D49469">
    <property type="protein sequence ID" value="BAA08441.1"/>
    <property type="molecule type" value="Genomic_DNA"/>
</dbReference>
<dbReference type="EMBL" id="U00096">
    <property type="protein sequence ID" value="AAC73962.1"/>
    <property type="molecule type" value="Genomic_DNA"/>
</dbReference>
<dbReference type="EMBL" id="AP009048">
    <property type="protein sequence ID" value="BAA35589.1"/>
    <property type="molecule type" value="Genomic_DNA"/>
</dbReference>
<dbReference type="PIR" id="C64826">
    <property type="entry name" value="C64826"/>
</dbReference>
<dbReference type="RefSeq" id="NP_415396.1">
    <property type="nucleotide sequence ID" value="NC_000913.3"/>
</dbReference>
<dbReference type="RefSeq" id="WP_001298299.1">
    <property type="nucleotide sequence ID" value="NZ_SSZK01000002.1"/>
</dbReference>
<dbReference type="PDB" id="1RC2">
    <property type="method" value="X-ray"/>
    <property type="resolution" value="2.50 A"/>
    <property type="chains" value="A/B=1-231"/>
</dbReference>
<dbReference type="PDB" id="2ABM">
    <property type="method" value="X-ray"/>
    <property type="resolution" value="3.20 A"/>
    <property type="chains" value="A/B/C/D/E/F/G/H=1-231"/>
</dbReference>
<dbReference type="PDB" id="2O9D">
    <property type="method" value="X-ray"/>
    <property type="resolution" value="2.30 A"/>
    <property type="chains" value="A/B=1-231"/>
</dbReference>
<dbReference type="PDB" id="2O9E">
    <property type="method" value="X-ray"/>
    <property type="resolution" value="2.20 A"/>
    <property type="chains" value="A=1-231"/>
</dbReference>
<dbReference type="PDB" id="2O9F">
    <property type="method" value="X-ray"/>
    <property type="resolution" value="2.55 A"/>
    <property type="chains" value="A/B=1-231"/>
</dbReference>
<dbReference type="PDB" id="2O9G">
    <property type="method" value="X-ray"/>
    <property type="resolution" value="1.90 A"/>
    <property type="chains" value="A=1-231"/>
</dbReference>
<dbReference type="PDB" id="3NK5">
    <property type="method" value="X-ray"/>
    <property type="resolution" value="2.40 A"/>
    <property type="chains" value="A/B=1-231"/>
</dbReference>
<dbReference type="PDB" id="3NKA">
    <property type="method" value="X-ray"/>
    <property type="resolution" value="2.50 A"/>
    <property type="chains" value="A/B=1-231"/>
</dbReference>
<dbReference type="PDB" id="3NKC">
    <property type="method" value="X-ray"/>
    <property type="resolution" value="3.10 A"/>
    <property type="chains" value="A/B=1-231"/>
</dbReference>
<dbReference type="PDB" id="8H1D">
    <property type="method" value="NMR"/>
    <property type="chains" value="A=1-231"/>
</dbReference>
<dbReference type="PDB" id="8UY6">
    <property type="method" value="EM"/>
    <property type="resolution" value="1.90 A"/>
    <property type="chains" value="A/C/E/G/I/K/M/O=1-227"/>
</dbReference>
<dbReference type="PDBsum" id="1RC2"/>
<dbReference type="PDBsum" id="2ABM"/>
<dbReference type="PDBsum" id="2O9D"/>
<dbReference type="PDBsum" id="2O9E"/>
<dbReference type="PDBsum" id="2O9F"/>
<dbReference type="PDBsum" id="2O9G"/>
<dbReference type="PDBsum" id="3NK5"/>
<dbReference type="PDBsum" id="3NKA"/>
<dbReference type="PDBsum" id="3NKC"/>
<dbReference type="PDBsum" id="8H1D"/>
<dbReference type="PDBsum" id="8UY6"/>
<dbReference type="EMDB" id="EMD-42793"/>
<dbReference type="SMR" id="P60844"/>
<dbReference type="BioGRID" id="4260000">
    <property type="interactions" value="107"/>
</dbReference>
<dbReference type="DIP" id="DIP-35499N"/>
<dbReference type="FunCoup" id="P60844">
    <property type="interactions" value="289"/>
</dbReference>
<dbReference type="STRING" id="511145.b0875"/>
<dbReference type="DrugBank" id="DB07349">
    <property type="generic name" value="(1S)-2-{[{[(2S)-2,3-DIHYDROXYPROPYL]OXY}(HYDROXY)PHOSPHORYL]OXY}-1-[(PENTANOYLOXY)METHYL]ETHYL OCTANOATE"/>
</dbReference>
<dbReference type="DrugBank" id="DB03152">
    <property type="generic name" value="B-2-Octylglucoside"/>
</dbReference>
<dbReference type="DrugBank" id="DB07923">
    <property type="generic name" value="octyl alpha-L-altropyranoside"/>
</dbReference>
<dbReference type="DrugBank" id="DB07924">
    <property type="generic name" value="octyl beta-D-galactopyranoside"/>
</dbReference>
<dbReference type="TCDB" id="1.A.8.3.1">
    <property type="family name" value="the major intrinsic protein (mip) family"/>
</dbReference>
<dbReference type="PaxDb" id="511145-b0875"/>
<dbReference type="EnsemblBacteria" id="AAC73962">
    <property type="protein sequence ID" value="AAC73962"/>
    <property type="gene ID" value="b0875"/>
</dbReference>
<dbReference type="GeneID" id="75170949"/>
<dbReference type="GeneID" id="945497"/>
<dbReference type="KEGG" id="ecj:JW0859"/>
<dbReference type="KEGG" id="eco:b0875"/>
<dbReference type="KEGG" id="ecoc:C3026_05435"/>
<dbReference type="PATRIC" id="fig|1411691.4.peg.1402"/>
<dbReference type="EchoBASE" id="EB1283"/>
<dbReference type="eggNOG" id="COG0580">
    <property type="taxonomic scope" value="Bacteria"/>
</dbReference>
<dbReference type="HOGENOM" id="CLU_020019_3_2_6"/>
<dbReference type="InParanoid" id="P60844"/>
<dbReference type="OMA" id="FKKKMFW"/>
<dbReference type="OrthoDB" id="9807293at2"/>
<dbReference type="PhylomeDB" id="P60844"/>
<dbReference type="BioCyc" id="EcoCyc:AQPZ-MONOMER"/>
<dbReference type="BioCyc" id="MetaCyc:AQPZ-MONOMER"/>
<dbReference type="CD-CODE" id="1209505D">
    <property type="entry name" value="Synthetic Condensate 000266"/>
</dbReference>
<dbReference type="EvolutionaryTrace" id="P60844"/>
<dbReference type="PRO" id="PR:P60844"/>
<dbReference type="Proteomes" id="UP000000625">
    <property type="component" value="Chromosome"/>
</dbReference>
<dbReference type="GO" id="GO:0005886">
    <property type="term" value="C:plasma membrane"/>
    <property type="evidence" value="ECO:0000314"/>
    <property type="project" value="EcoCyc"/>
</dbReference>
<dbReference type="GO" id="GO:0042802">
    <property type="term" value="F:identical protein binding"/>
    <property type="evidence" value="ECO:0000314"/>
    <property type="project" value="EcoCyc"/>
</dbReference>
<dbReference type="GO" id="GO:0015250">
    <property type="term" value="F:water channel activity"/>
    <property type="evidence" value="ECO:0000314"/>
    <property type="project" value="EcoCyc"/>
</dbReference>
<dbReference type="GO" id="GO:0009992">
    <property type="term" value="P:intracellular water homeostasis"/>
    <property type="evidence" value="ECO:0000315"/>
    <property type="project" value="EcoCyc"/>
</dbReference>
<dbReference type="GO" id="GO:0006970">
    <property type="term" value="P:response to osmotic stress"/>
    <property type="evidence" value="ECO:0000315"/>
    <property type="project" value="EcoCyc"/>
</dbReference>
<dbReference type="GO" id="GO:0006833">
    <property type="term" value="P:water transport"/>
    <property type="evidence" value="ECO:0000314"/>
    <property type="project" value="EcoCyc"/>
</dbReference>
<dbReference type="CDD" id="cd00333">
    <property type="entry name" value="MIP"/>
    <property type="match status" value="1"/>
</dbReference>
<dbReference type="FunFam" id="1.20.1080.10:FF:000007">
    <property type="entry name" value="Aquaporin Z"/>
    <property type="match status" value="1"/>
</dbReference>
<dbReference type="Gene3D" id="1.20.1080.10">
    <property type="entry name" value="Glycerol uptake facilitator protein"/>
    <property type="match status" value="1"/>
</dbReference>
<dbReference type="HAMAP" id="MF_01146">
    <property type="entry name" value="Aquaporin_Z"/>
    <property type="match status" value="1"/>
</dbReference>
<dbReference type="InterPro" id="IPR023271">
    <property type="entry name" value="Aquaporin-like"/>
</dbReference>
<dbReference type="InterPro" id="IPR034294">
    <property type="entry name" value="Aquaporin_transptr"/>
</dbReference>
<dbReference type="InterPro" id="IPR023743">
    <property type="entry name" value="Aquaporin_Z"/>
</dbReference>
<dbReference type="InterPro" id="IPR000425">
    <property type="entry name" value="MIP"/>
</dbReference>
<dbReference type="InterPro" id="IPR022357">
    <property type="entry name" value="MIP_CS"/>
</dbReference>
<dbReference type="NCBIfam" id="TIGR00861">
    <property type="entry name" value="MIP"/>
    <property type="match status" value="1"/>
</dbReference>
<dbReference type="NCBIfam" id="NF003838">
    <property type="entry name" value="PRK05420.1"/>
    <property type="match status" value="1"/>
</dbReference>
<dbReference type="PANTHER" id="PTHR19139">
    <property type="entry name" value="AQUAPORIN TRANSPORTER"/>
    <property type="match status" value="1"/>
</dbReference>
<dbReference type="PANTHER" id="PTHR19139:SF199">
    <property type="entry name" value="MIP17260P"/>
    <property type="match status" value="1"/>
</dbReference>
<dbReference type="Pfam" id="PF00230">
    <property type="entry name" value="MIP"/>
    <property type="match status" value="1"/>
</dbReference>
<dbReference type="PRINTS" id="PR00783">
    <property type="entry name" value="MINTRINSICP"/>
</dbReference>
<dbReference type="SUPFAM" id="SSF81338">
    <property type="entry name" value="Aquaporin-like"/>
    <property type="match status" value="1"/>
</dbReference>
<dbReference type="PROSITE" id="PS00221">
    <property type="entry name" value="MIP"/>
    <property type="match status" value="1"/>
</dbReference>
<proteinExistence type="evidence at protein level"/>
<gene>
    <name type="primary">aqpZ</name>
    <name type="synonym">bniP</name>
    <name type="ordered locus">b0875</name>
    <name type="ordered locus">JW0859</name>
</gene>
<accession>P60844</accession>
<accession>P48838</accession>
<accession>P75827</accession>
<accession>Q47159</accession>
<feature type="chain" id="PRO_0000063989" description="Aquaporin Z">
    <location>
        <begin position="1"/>
        <end position="231"/>
    </location>
</feature>
<feature type="topological domain" description="Cytoplasmic" evidence="1">
    <location>
        <begin position="1"/>
        <end position="8"/>
    </location>
</feature>
<feature type="transmembrane region" description="Helical; Name=1" evidence="1">
    <location>
        <begin position="9"/>
        <end position="29"/>
    </location>
</feature>
<feature type="topological domain" description="Periplasmic" evidence="1">
    <location>
        <begin position="30"/>
        <end position="33"/>
    </location>
</feature>
<feature type="transmembrane region" description="Helical; Name=2" evidence="1">
    <location>
        <begin position="34"/>
        <end position="54"/>
    </location>
</feature>
<feature type="topological domain" description="Cytoplasmic" evidence="1">
    <location>
        <begin position="55"/>
        <end position="81"/>
    </location>
</feature>
<feature type="transmembrane region" description="Helical; Name=3" evidence="1">
    <location>
        <begin position="82"/>
        <end position="102"/>
    </location>
</feature>
<feature type="topological domain" description="Periplasmic" evidence="1">
    <location>
        <begin position="103"/>
        <end position="130"/>
    </location>
</feature>
<feature type="transmembrane region" description="Helical; Name=4" evidence="1">
    <location>
        <begin position="131"/>
        <end position="151"/>
    </location>
</feature>
<feature type="topological domain" description="Cytoplasmic" evidence="1">
    <location>
        <begin position="152"/>
        <end position="155"/>
    </location>
</feature>
<feature type="transmembrane region" description="Helical; Name=5" evidence="1">
    <location>
        <begin position="156"/>
        <end position="176"/>
    </location>
</feature>
<feature type="topological domain" description="Periplasmic" evidence="1">
    <location>
        <begin position="177"/>
        <end position="201"/>
    </location>
</feature>
<feature type="transmembrane region" description="Helical; Name=6" evidence="1">
    <location>
        <begin position="202"/>
        <end position="222"/>
    </location>
</feature>
<feature type="topological domain" description="Cytoplasmic" evidence="1">
    <location>
        <begin position="223"/>
        <end position="231"/>
    </location>
</feature>
<feature type="short sequence motif" description="NPA 1">
    <location>
        <begin position="63"/>
        <end position="65"/>
    </location>
</feature>
<feature type="short sequence motif" description="NPA 2">
    <location>
        <begin position="186"/>
        <end position="188"/>
    </location>
</feature>
<feature type="site" description="Involved in tetramerization or stability of the tetramer">
    <location>
        <position position="20"/>
    </location>
</feature>
<feature type="site" description="Selectivity filter">
    <location>
        <position position="43"/>
    </location>
</feature>
<feature type="site" description="Selectivity filter">
    <location>
        <position position="174"/>
    </location>
</feature>
<feature type="site" description="Selectivity filter">
    <location>
        <position position="183"/>
    </location>
</feature>
<feature type="site" description="Selectivity filter">
    <location>
        <position position="189"/>
    </location>
</feature>
<feature type="mutagenesis site" description="No effect." evidence="5">
    <original>C</original>
    <variation>S</variation>
    <location>
        <position position="9"/>
    </location>
</feature>
<feature type="mutagenesis site" description="Loss of oligomerization; no alteration of water permeability." evidence="5">
    <original>C</original>
    <variation>S</variation>
    <location>
        <position position="20"/>
    </location>
</feature>
<feature type="mutagenesis site" description="No effect." evidence="5">
    <original>T</original>
    <variation>C</variation>
    <location>
        <position position="183"/>
    </location>
</feature>
<feature type="mutagenesis site" description="Loss of function." evidence="5">
    <original>R</original>
    <variation>V</variation>
    <variation>S</variation>
    <location>
        <position position="189"/>
    </location>
</feature>
<feature type="sequence conflict" description="In Ref. 2; BAA08441." evidence="8" ref="2">
    <original>W</original>
    <variation>C</variation>
    <location>
        <position position="14"/>
    </location>
</feature>
<feature type="sequence conflict" description="In Ref. 2; BAA08441." evidence="8" ref="2">
    <original>A</original>
    <variation>P</variation>
    <location>
        <position position="26"/>
    </location>
</feature>
<feature type="sequence conflict" description="In Ref. 1; AAC43518." evidence="8" ref="1">
    <original>L</original>
    <variation>V</variation>
    <location>
        <position position="99"/>
    </location>
</feature>
<feature type="helix" evidence="11">
    <location>
        <begin position="1"/>
        <end position="25"/>
    </location>
</feature>
<feature type="turn" evidence="11">
    <location>
        <begin position="26"/>
        <end position="28"/>
    </location>
</feature>
<feature type="turn" evidence="11">
    <location>
        <begin position="30"/>
        <end position="32"/>
    </location>
</feature>
<feature type="helix" evidence="11">
    <location>
        <begin position="35"/>
        <end position="58"/>
    </location>
</feature>
<feature type="helix" evidence="11">
    <location>
        <begin position="64"/>
        <end position="72"/>
    </location>
</feature>
<feature type="helix" evidence="11">
    <location>
        <begin position="78"/>
        <end position="80"/>
    </location>
</feature>
<feature type="helix" evidence="11">
    <location>
        <begin position="81"/>
        <end position="103"/>
    </location>
</feature>
<feature type="helix" evidence="11">
    <location>
        <begin position="111"/>
        <end position="114"/>
    </location>
</feature>
<feature type="helix" evidence="10">
    <location>
        <begin position="115"/>
        <end position="117"/>
    </location>
</feature>
<feature type="helix" evidence="11">
    <location>
        <begin position="122"/>
        <end position="124"/>
    </location>
</feature>
<feature type="strand" evidence="10">
    <location>
        <begin position="125"/>
        <end position="127"/>
    </location>
</feature>
<feature type="helix" evidence="11">
    <location>
        <begin position="131"/>
        <end position="152"/>
    </location>
</feature>
<feature type="strand" evidence="12">
    <location>
        <begin position="158"/>
        <end position="160"/>
    </location>
</feature>
<feature type="helix" evidence="11">
    <location>
        <begin position="162"/>
        <end position="181"/>
    </location>
</feature>
<feature type="helix" evidence="11">
    <location>
        <begin position="187"/>
        <end position="197"/>
    </location>
</feature>
<feature type="helix" evidence="11">
    <location>
        <begin position="200"/>
        <end position="203"/>
    </location>
</feature>
<feature type="helix" evidence="11">
    <location>
        <begin position="205"/>
        <end position="226"/>
    </location>
</feature>
<sequence>MFRKLAAECFGTFWLVFGGCGSAVLAAGFPELGIGFAGVALAFGLTVLTMAFAVGHISGGHFNPAVTIGLWAGGRFPAKEVVGYVIAQVVGGIVAAALLYLIASGKTGFDAAASGFASNGYGEHSPGGYSMLSALVVELVLSAGFLLVIHGATDKFAPAGFAPIAIGLALTLIHLISIPVTNTSVNPARSTAVAIFQGGWALEQLWFFWVVPIVGGIIGGLIYRTLLEKRD</sequence>
<organism>
    <name type="scientific">Escherichia coli (strain K12)</name>
    <dbReference type="NCBI Taxonomy" id="83333"/>
    <lineage>
        <taxon>Bacteria</taxon>
        <taxon>Pseudomonadati</taxon>
        <taxon>Pseudomonadota</taxon>
        <taxon>Gammaproteobacteria</taxon>
        <taxon>Enterobacterales</taxon>
        <taxon>Enterobacteriaceae</taxon>
        <taxon>Escherichia</taxon>
    </lineage>
</organism>
<evidence type="ECO:0000255" key="1"/>
<evidence type="ECO:0000255" key="2">
    <source>
        <dbReference type="HAMAP-Rule" id="MF_01146"/>
    </source>
</evidence>
<evidence type="ECO:0000269" key="3">
    <source>
    </source>
</evidence>
<evidence type="ECO:0000269" key="4">
    <source>
    </source>
</evidence>
<evidence type="ECO:0000269" key="5">
    <source>
    </source>
</evidence>
<evidence type="ECO:0000269" key="6">
    <source>
    </source>
</evidence>
<evidence type="ECO:0000269" key="7">
    <source>
    </source>
</evidence>
<evidence type="ECO:0000305" key="8"/>
<evidence type="ECO:0000305" key="9">
    <source>
    </source>
</evidence>
<evidence type="ECO:0007829" key="10">
    <source>
        <dbReference type="PDB" id="2O9F"/>
    </source>
</evidence>
<evidence type="ECO:0007829" key="11">
    <source>
        <dbReference type="PDB" id="2O9G"/>
    </source>
</evidence>
<evidence type="ECO:0007829" key="12">
    <source>
        <dbReference type="PDB" id="8H1D"/>
    </source>
</evidence>
<keyword id="KW-0002">3D-structure</keyword>
<keyword id="KW-0997">Cell inner membrane</keyword>
<keyword id="KW-1003">Cell membrane</keyword>
<keyword id="KW-0472">Membrane</keyword>
<keyword id="KW-1185">Reference proteome</keyword>
<keyword id="KW-0677">Repeat</keyword>
<keyword id="KW-0812">Transmembrane</keyword>
<keyword id="KW-1133">Transmembrane helix</keyword>
<keyword id="KW-0813">Transport</keyword>
<reference key="1">
    <citation type="journal article" date="1995" name="J. Biol. Chem.">
        <title>Molecular cloning and characterization of AqpZ, a water channel from Escherichia coli.</title>
        <authorList>
            <person name="Calamita G."/>
            <person name="Bishai W.R."/>
            <person name="Preston G.M."/>
            <person name="Guggino W.B."/>
            <person name="Agre P."/>
        </authorList>
    </citation>
    <scope>NUCLEOTIDE SEQUENCE [GENOMIC DNA]</scope>
    <source>
        <strain>K12 / DH5-alpha</strain>
    </source>
</reference>
<reference key="2">
    <citation type="submission" date="1995-03" db="EMBL/GenBank/DDBJ databases">
        <title>Cloning and expression of a new member of aquaporin water channel family of E. coli.</title>
        <authorList>
            <person name="Fushimi K."/>
        </authorList>
    </citation>
    <scope>NUCLEOTIDE SEQUENCE [GENOMIC DNA]</scope>
    <source>
        <strain>LE392</strain>
    </source>
</reference>
<reference key="3">
    <citation type="journal article" date="1997" name="Biochem. Mol. Biol. Int.">
        <title>Isolation of a gene encoding nodulin-like intrinsic protein of Escherichia coli.</title>
        <authorList>
            <person name="Fushimi K."/>
            <person name="Bai L."/>
            <person name="Marumo F."/>
            <person name="Sasaki S."/>
        </authorList>
    </citation>
    <scope>NUCLEOTIDE SEQUENCE [GENOMIC DNA]</scope>
</reference>
<reference key="4">
    <citation type="journal article" date="1996" name="DNA Res.">
        <title>A 718-kb DNA sequence of the Escherichia coli K-12 genome corresponding to the 12.7-28.0 min region on the linkage map.</title>
        <authorList>
            <person name="Oshima T."/>
            <person name="Aiba H."/>
            <person name="Baba T."/>
            <person name="Fujita K."/>
            <person name="Hayashi K."/>
            <person name="Honjo A."/>
            <person name="Ikemoto K."/>
            <person name="Inada T."/>
            <person name="Itoh T."/>
            <person name="Kajihara M."/>
            <person name="Kanai K."/>
            <person name="Kashimoto K."/>
            <person name="Kimura S."/>
            <person name="Kitagawa M."/>
            <person name="Makino K."/>
            <person name="Masuda S."/>
            <person name="Miki T."/>
            <person name="Mizobuchi K."/>
            <person name="Mori H."/>
            <person name="Motomura K."/>
            <person name="Nakamura Y."/>
            <person name="Nashimoto H."/>
            <person name="Nishio Y."/>
            <person name="Saito N."/>
            <person name="Sampei G."/>
            <person name="Seki Y."/>
            <person name="Tagami H."/>
            <person name="Takemoto K."/>
            <person name="Wada C."/>
            <person name="Yamamoto Y."/>
            <person name="Yano M."/>
            <person name="Horiuchi T."/>
        </authorList>
    </citation>
    <scope>NUCLEOTIDE SEQUENCE [LARGE SCALE GENOMIC DNA]</scope>
    <source>
        <strain>K12 / W3110 / ATCC 27325 / DSM 5911</strain>
    </source>
</reference>
<reference key="5">
    <citation type="journal article" date="1997" name="Science">
        <title>The complete genome sequence of Escherichia coli K-12.</title>
        <authorList>
            <person name="Blattner F.R."/>
            <person name="Plunkett G. III"/>
            <person name="Bloch C.A."/>
            <person name="Perna N.T."/>
            <person name="Burland V."/>
            <person name="Riley M."/>
            <person name="Collado-Vides J."/>
            <person name="Glasner J.D."/>
            <person name="Rode C.K."/>
            <person name="Mayhew G.F."/>
            <person name="Gregor J."/>
            <person name="Davis N.W."/>
            <person name="Kirkpatrick H.A."/>
            <person name="Goeden M.A."/>
            <person name="Rose D.J."/>
            <person name="Mau B."/>
            <person name="Shao Y."/>
        </authorList>
    </citation>
    <scope>NUCLEOTIDE SEQUENCE [LARGE SCALE GENOMIC DNA]</scope>
    <source>
        <strain>K12 / MG1655 / ATCC 47076</strain>
    </source>
</reference>
<reference key="6">
    <citation type="journal article" date="2006" name="Mol. Syst. Biol.">
        <title>Highly accurate genome sequences of Escherichia coli K-12 strains MG1655 and W3110.</title>
        <authorList>
            <person name="Hayashi K."/>
            <person name="Morooka N."/>
            <person name="Yamamoto Y."/>
            <person name="Fujita K."/>
            <person name="Isono K."/>
            <person name="Choi S."/>
            <person name="Ohtsubo E."/>
            <person name="Baba T."/>
            <person name="Wanner B.L."/>
            <person name="Mori H."/>
            <person name="Horiuchi T."/>
        </authorList>
    </citation>
    <scope>NUCLEOTIDE SEQUENCE [LARGE SCALE GENOMIC DNA]</scope>
    <source>
        <strain>K12 / W3110 / ATCC 27325 / DSM 5911</strain>
    </source>
</reference>
<reference key="7">
    <citation type="journal article" date="1999" name="J. Bacteriol.">
        <title>Visualization of AqpZ-mediated water permeability in Escherichia coli by cryoelectron microscopy.</title>
        <authorList>
            <person name="Delamarche C."/>
            <person name="Thomas D."/>
            <person name="Rolland J.-P."/>
            <person name="Froger A."/>
            <person name="Gouranton J."/>
            <person name="Svelto M."/>
            <person name="Agre P."/>
            <person name="Calamita G."/>
        </authorList>
    </citation>
    <scope>FUNCTION</scope>
    <scope>CATALYTIC ACTIVITY</scope>
    <source>
        <strain>K12 / DH5-alpha</strain>
    </source>
</reference>
<reference key="8">
    <citation type="journal article" date="1999" name="J. Mol. Biol.">
        <title>Functional reconstitution and characterization of AqpZ, the E. coli water channel protein.</title>
        <authorList>
            <person name="Borgnia M.J."/>
            <person name="Kozono D."/>
            <person name="Calamita G."/>
            <person name="Maloney P.C."/>
            <person name="Agre P."/>
        </authorList>
    </citation>
    <scope>FUNCTION</scope>
    <scope>CATALYTIC ACTIVITY</scope>
    <scope>SUBUNIT</scope>
    <scope>SUBCELLULAR LOCATION</scope>
    <scope>MUTAGENESIS OF CYS-9; CYS-20; THR-183 AND ARG-189</scope>
    <source>
        <strain>K12 / DH5-alpha</strain>
    </source>
</reference>
<reference key="9">
    <citation type="journal article" date="2001" name="Proc. Natl. Acad. Sci. U.S.A.">
        <title>Highly selective water channel activity measured by voltage clamp: Analysis of planar lipid bilayers reconstituted with purified AqpZ.</title>
        <authorList>
            <person name="Pohl P."/>
            <person name="Saparov S.M."/>
            <person name="Borgnia M.J."/>
            <person name="Agre P."/>
        </authorList>
    </citation>
    <scope>FUNCTION</scope>
    <scope>CATALYTIC ACTIVITY</scope>
    <scope>CHARACTERIZATION OF MEMBRANE SELECTIVITY</scope>
    <source>
        <strain>K12 / DH5-alpha</strain>
    </source>
</reference>
<reference key="10">
    <citation type="journal article" date="1999" name="J. Mol. Biol.">
        <title>Structure of the water channel AqpZ from Escherichia coli revealed by electron crystallography.</title>
        <authorList>
            <person name="Ringler P."/>
            <person name="Borgnia M.J."/>
            <person name="Stahlberg H."/>
            <person name="Maloney P.C."/>
            <person name="Agre P."/>
            <person name="Engel A."/>
        </authorList>
    </citation>
    <scope>CRYSTALLIZATION</scope>
    <scope>SUBUNIT</scope>
</reference>
<reference key="11">
    <citation type="journal article" date="1999" name="EMBO J.">
        <title>High resolution AFM topographs of the Escherichia coli water channel aquaporin Z.</title>
        <authorList>
            <person name="Scheuring S."/>
            <person name="Ringler P."/>
            <person name="Borgnia M.J."/>
            <person name="Stahlberg H."/>
            <person name="Mueller D.J."/>
            <person name="Agre P."/>
            <person name="Engel A."/>
        </authorList>
    </citation>
    <scope>SUBUNIT</scope>
    <scope>SUBCELLULAR LOCATION</scope>
    <scope>TOPOLOGY</scope>
</reference>
<reference key="12">
    <citation type="journal article" date="2005" name="Science">
        <title>Global topology analysis of the Escherichia coli inner membrane proteome.</title>
        <authorList>
            <person name="Daley D.O."/>
            <person name="Rapp M."/>
            <person name="Granseth E."/>
            <person name="Melen K."/>
            <person name="Drew D."/>
            <person name="von Heijne G."/>
        </authorList>
    </citation>
    <scope>TOPOLOGY [LARGE SCALE ANALYSIS]</scope>
    <source>
        <strain>K12 / MG1655 / ATCC 47076</strain>
    </source>
</reference>
<reference key="13">
    <citation type="journal article" date="2003" name="PLoS Biol.">
        <title>Architecture and selectivity in aquaporins: 2.5 A X-ray structure of aquaporin Z.</title>
        <authorList>
            <person name="Savage D.F."/>
            <person name="Egea P.F."/>
            <person name="Robles-Colmenares Y."/>
            <person name="O'Connell J.D. III"/>
            <person name="Stroud R.M."/>
        </authorList>
    </citation>
    <scope>X-RAY CRYSTALLOGRAPHY (2.5 ANGSTROMS)</scope>
</reference>
<reference key="14">
    <citation type="journal article" date="2000" name="Mol. Microbiol.">
        <title>The Escherichia coli aquaporin-Z water channel.</title>
        <authorList>
            <person name="Calamita G."/>
        </authorList>
    </citation>
    <scope>REVIEW</scope>
</reference>